<accession>A1RHF6</accession>
<protein>
    <recommendedName>
        <fullName evidence="1">2-C-methyl-D-erythritol 2,4-cyclodiphosphate synthase</fullName>
        <shortName evidence="1">MECDP-synthase</shortName>
        <shortName evidence="1">MECPP-synthase</shortName>
        <shortName evidence="1">MECPS</shortName>
        <ecNumber evidence="1">4.6.1.12</ecNumber>
    </recommendedName>
</protein>
<comment type="function">
    <text evidence="1">Involved in the biosynthesis of isopentenyl diphosphate (IPP) and dimethylallyl diphosphate (DMAPP), two major building blocks of isoprenoid compounds. Catalyzes the conversion of 4-diphosphocytidyl-2-C-methyl-D-erythritol 2-phosphate (CDP-ME2P) to 2-C-methyl-D-erythritol 2,4-cyclodiphosphate (ME-CPP) with a corresponding release of cytidine 5-monophosphate (CMP).</text>
</comment>
<comment type="catalytic activity">
    <reaction evidence="1">
        <text>4-CDP-2-C-methyl-D-erythritol 2-phosphate = 2-C-methyl-D-erythritol 2,4-cyclic diphosphate + CMP</text>
        <dbReference type="Rhea" id="RHEA:23864"/>
        <dbReference type="ChEBI" id="CHEBI:57919"/>
        <dbReference type="ChEBI" id="CHEBI:58483"/>
        <dbReference type="ChEBI" id="CHEBI:60377"/>
        <dbReference type="EC" id="4.6.1.12"/>
    </reaction>
</comment>
<comment type="cofactor">
    <cofactor evidence="1">
        <name>a divalent metal cation</name>
        <dbReference type="ChEBI" id="CHEBI:60240"/>
    </cofactor>
    <text evidence="1">Binds 1 divalent metal cation per subunit.</text>
</comment>
<comment type="pathway">
    <text evidence="1">Isoprenoid biosynthesis; isopentenyl diphosphate biosynthesis via DXP pathway; isopentenyl diphosphate from 1-deoxy-D-xylulose 5-phosphate: step 4/6.</text>
</comment>
<comment type="subunit">
    <text evidence="1">Homotrimer.</text>
</comment>
<comment type="similarity">
    <text evidence="1">Belongs to the IspF family.</text>
</comment>
<sequence>MKIRIGHGFDVHKFGEVRPLILCGVEVPYETGLVAHSDGDVVLHAVSDAILGAMALGDIGKHFPDTDTAYKGADSRVLLRHCYDLAKQRGFELGNVDVTIIAQAPKIAPHIEAMRQVLATDLMAELDDINVKATTTEKLGFTGRKEGIAVEAVVLMSRKQD</sequence>
<reference key="1">
    <citation type="submission" date="2006-12" db="EMBL/GenBank/DDBJ databases">
        <title>Complete sequence of Shewanella sp. W3-18-1.</title>
        <authorList>
            <consortium name="US DOE Joint Genome Institute"/>
            <person name="Copeland A."/>
            <person name="Lucas S."/>
            <person name="Lapidus A."/>
            <person name="Barry K."/>
            <person name="Detter J.C."/>
            <person name="Glavina del Rio T."/>
            <person name="Hammon N."/>
            <person name="Israni S."/>
            <person name="Dalin E."/>
            <person name="Tice H."/>
            <person name="Pitluck S."/>
            <person name="Chain P."/>
            <person name="Malfatti S."/>
            <person name="Shin M."/>
            <person name="Vergez L."/>
            <person name="Schmutz J."/>
            <person name="Larimer F."/>
            <person name="Land M."/>
            <person name="Hauser L."/>
            <person name="Kyrpides N."/>
            <person name="Lykidis A."/>
            <person name="Tiedje J."/>
            <person name="Richardson P."/>
        </authorList>
    </citation>
    <scope>NUCLEOTIDE SEQUENCE [LARGE SCALE GENOMIC DNA]</scope>
    <source>
        <strain>W3-18-1</strain>
    </source>
</reference>
<organism>
    <name type="scientific">Shewanella sp. (strain W3-18-1)</name>
    <dbReference type="NCBI Taxonomy" id="351745"/>
    <lineage>
        <taxon>Bacteria</taxon>
        <taxon>Pseudomonadati</taxon>
        <taxon>Pseudomonadota</taxon>
        <taxon>Gammaproteobacteria</taxon>
        <taxon>Alteromonadales</taxon>
        <taxon>Shewanellaceae</taxon>
        <taxon>Shewanella</taxon>
    </lineage>
</organism>
<name>ISPF_SHESW</name>
<dbReference type="EC" id="4.6.1.12" evidence="1"/>
<dbReference type="EMBL" id="CP000503">
    <property type="protein sequence ID" value="ABM24101.1"/>
    <property type="molecule type" value="Genomic_DNA"/>
</dbReference>
<dbReference type="RefSeq" id="WP_011788608.1">
    <property type="nucleotide sequence ID" value="NC_008750.1"/>
</dbReference>
<dbReference type="SMR" id="A1RHF6"/>
<dbReference type="KEGG" id="shw:Sputw3181_1258"/>
<dbReference type="HOGENOM" id="CLU_084630_2_0_6"/>
<dbReference type="UniPathway" id="UPA00056">
    <property type="reaction ID" value="UER00095"/>
</dbReference>
<dbReference type="Proteomes" id="UP000002597">
    <property type="component" value="Chromosome"/>
</dbReference>
<dbReference type="GO" id="GO:0008685">
    <property type="term" value="F:2-C-methyl-D-erythritol 2,4-cyclodiphosphate synthase activity"/>
    <property type="evidence" value="ECO:0007669"/>
    <property type="project" value="UniProtKB-UniRule"/>
</dbReference>
<dbReference type="GO" id="GO:0046872">
    <property type="term" value="F:metal ion binding"/>
    <property type="evidence" value="ECO:0007669"/>
    <property type="project" value="UniProtKB-KW"/>
</dbReference>
<dbReference type="GO" id="GO:0019288">
    <property type="term" value="P:isopentenyl diphosphate biosynthetic process, methylerythritol 4-phosphate pathway"/>
    <property type="evidence" value="ECO:0007669"/>
    <property type="project" value="UniProtKB-UniRule"/>
</dbReference>
<dbReference type="GO" id="GO:0016114">
    <property type="term" value="P:terpenoid biosynthetic process"/>
    <property type="evidence" value="ECO:0007669"/>
    <property type="project" value="InterPro"/>
</dbReference>
<dbReference type="CDD" id="cd00554">
    <property type="entry name" value="MECDP_synthase"/>
    <property type="match status" value="1"/>
</dbReference>
<dbReference type="FunFam" id="3.30.1330.50:FF:000001">
    <property type="entry name" value="2-C-methyl-D-erythritol 2,4-cyclodiphosphate synthase"/>
    <property type="match status" value="1"/>
</dbReference>
<dbReference type="Gene3D" id="3.30.1330.50">
    <property type="entry name" value="2-C-methyl-D-erythritol 2,4-cyclodiphosphate synthase"/>
    <property type="match status" value="1"/>
</dbReference>
<dbReference type="HAMAP" id="MF_00107">
    <property type="entry name" value="IspF"/>
    <property type="match status" value="1"/>
</dbReference>
<dbReference type="InterPro" id="IPR003526">
    <property type="entry name" value="MECDP_synthase"/>
</dbReference>
<dbReference type="InterPro" id="IPR020555">
    <property type="entry name" value="MECDP_synthase_CS"/>
</dbReference>
<dbReference type="InterPro" id="IPR036571">
    <property type="entry name" value="MECDP_synthase_sf"/>
</dbReference>
<dbReference type="NCBIfam" id="TIGR00151">
    <property type="entry name" value="ispF"/>
    <property type="match status" value="1"/>
</dbReference>
<dbReference type="PANTHER" id="PTHR43181">
    <property type="entry name" value="2-C-METHYL-D-ERYTHRITOL 2,4-CYCLODIPHOSPHATE SYNTHASE, CHLOROPLASTIC"/>
    <property type="match status" value="1"/>
</dbReference>
<dbReference type="PANTHER" id="PTHR43181:SF1">
    <property type="entry name" value="2-C-METHYL-D-ERYTHRITOL 2,4-CYCLODIPHOSPHATE SYNTHASE, CHLOROPLASTIC"/>
    <property type="match status" value="1"/>
</dbReference>
<dbReference type="Pfam" id="PF02542">
    <property type="entry name" value="YgbB"/>
    <property type="match status" value="1"/>
</dbReference>
<dbReference type="SUPFAM" id="SSF69765">
    <property type="entry name" value="IpsF-like"/>
    <property type="match status" value="1"/>
</dbReference>
<dbReference type="PROSITE" id="PS01350">
    <property type="entry name" value="ISPF"/>
    <property type="match status" value="1"/>
</dbReference>
<gene>
    <name evidence="1" type="primary">ispF</name>
    <name type="ordered locus">Sputw3181_1258</name>
</gene>
<proteinExistence type="inferred from homology"/>
<evidence type="ECO:0000255" key="1">
    <source>
        <dbReference type="HAMAP-Rule" id="MF_00107"/>
    </source>
</evidence>
<feature type="chain" id="PRO_1000022885" description="2-C-methyl-D-erythritol 2,4-cyclodiphosphate synthase">
    <location>
        <begin position="1"/>
        <end position="161"/>
    </location>
</feature>
<feature type="binding site" evidence="1">
    <location>
        <begin position="10"/>
        <end position="12"/>
    </location>
    <ligand>
        <name>4-CDP-2-C-methyl-D-erythritol 2-phosphate</name>
        <dbReference type="ChEBI" id="CHEBI:57919"/>
    </ligand>
</feature>
<feature type="binding site" evidence="1">
    <location>
        <position position="10"/>
    </location>
    <ligand>
        <name>a divalent metal cation</name>
        <dbReference type="ChEBI" id="CHEBI:60240"/>
    </ligand>
</feature>
<feature type="binding site" evidence="1">
    <location>
        <position position="12"/>
    </location>
    <ligand>
        <name>a divalent metal cation</name>
        <dbReference type="ChEBI" id="CHEBI:60240"/>
    </ligand>
</feature>
<feature type="binding site" evidence="1">
    <location>
        <begin position="36"/>
        <end position="37"/>
    </location>
    <ligand>
        <name>4-CDP-2-C-methyl-D-erythritol 2-phosphate</name>
        <dbReference type="ChEBI" id="CHEBI:57919"/>
    </ligand>
</feature>
<feature type="binding site" evidence="1">
    <location>
        <position position="44"/>
    </location>
    <ligand>
        <name>a divalent metal cation</name>
        <dbReference type="ChEBI" id="CHEBI:60240"/>
    </ligand>
</feature>
<feature type="binding site" evidence="1">
    <location>
        <begin position="58"/>
        <end position="60"/>
    </location>
    <ligand>
        <name>4-CDP-2-C-methyl-D-erythritol 2-phosphate</name>
        <dbReference type="ChEBI" id="CHEBI:57919"/>
    </ligand>
</feature>
<feature type="binding site" evidence="1">
    <location>
        <begin position="63"/>
        <end position="67"/>
    </location>
    <ligand>
        <name>4-CDP-2-C-methyl-D-erythritol 2-phosphate</name>
        <dbReference type="ChEBI" id="CHEBI:57919"/>
    </ligand>
</feature>
<feature type="binding site" evidence="1">
    <location>
        <begin position="134"/>
        <end position="137"/>
    </location>
    <ligand>
        <name>4-CDP-2-C-methyl-D-erythritol 2-phosphate</name>
        <dbReference type="ChEBI" id="CHEBI:57919"/>
    </ligand>
</feature>
<feature type="binding site" evidence="1">
    <location>
        <position position="141"/>
    </location>
    <ligand>
        <name>4-CDP-2-C-methyl-D-erythritol 2-phosphate</name>
        <dbReference type="ChEBI" id="CHEBI:57919"/>
    </ligand>
</feature>
<feature type="binding site" evidence="1">
    <location>
        <position position="144"/>
    </location>
    <ligand>
        <name>4-CDP-2-C-methyl-D-erythritol 2-phosphate</name>
        <dbReference type="ChEBI" id="CHEBI:57919"/>
    </ligand>
</feature>
<feature type="site" description="Transition state stabilizer" evidence="1">
    <location>
        <position position="36"/>
    </location>
</feature>
<feature type="site" description="Transition state stabilizer" evidence="1">
    <location>
        <position position="135"/>
    </location>
</feature>
<keyword id="KW-0414">Isoprene biosynthesis</keyword>
<keyword id="KW-0456">Lyase</keyword>
<keyword id="KW-0479">Metal-binding</keyword>